<keyword id="KW-0963">Cytoplasm</keyword>
<keyword id="KW-0413">Isomerase</keyword>
<keyword id="KW-0627">Porphyrin biosynthesis</keyword>
<keyword id="KW-0663">Pyridoxal phosphate</keyword>
<reference key="1">
    <citation type="journal article" date="2004" name="Nucleic Acids Res.">
        <title>Unique features revealed by the genome sequence of Acinetobacter sp. ADP1, a versatile and naturally transformation competent bacterium.</title>
        <authorList>
            <person name="Barbe V."/>
            <person name="Vallenet D."/>
            <person name="Fonknechten N."/>
            <person name="Kreimeyer A."/>
            <person name="Oztas S."/>
            <person name="Labarre L."/>
            <person name="Cruveiller S."/>
            <person name="Robert C."/>
            <person name="Duprat S."/>
            <person name="Wincker P."/>
            <person name="Ornston L.N."/>
            <person name="Weissenbach J."/>
            <person name="Marliere P."/>
            <person name="Cohen G.N."/>
            <person name="Medigue C."/>
        </authorList>
    </citation>
    <scope>NUCLEOTIDE SEQUENCE [LARGE SCALE GENOMIC DNA]</scope>
    <source>
        <strain>ATCC 33305 / BD413 / ADP1</strain>
    </source>
</reference>
<evidence type="ECO:0000255" key="1">
    <source>
        <dbReference type="HAMAP-Rule" id="MF_00375"/>
    </source>
</evidence>
<organism>
    <name type="scientific">Acinetobacter baylyi (strain ATCC 33305 / BD413 / ADP1)</name>
    <dbReference type="NCBI Taxonomy" id="62977"/>
    <lineage>
        <taxon>Bacteria</taxon>
        <taxon>Pseudomonadati</taxon>
        <taxon>Pseudomonadota</taxon>
        <taxon>Gammaproteobacteria</taxon>
        <taxon>Moraxellales</taxon>
        <taxon>Moraxellaceae</taxon>
        <taxon>Acinetobacter</taxon>
    </lineage>
</organism>
<protein>
    <recommendedName>
        <fullName evidence="1">Glutamate-1-semialdehyde 2,1-aminomutase</fullName>
        <shortName evidence="1">GSA</shortName>
        <ecNumber evidence="1">5.4.3.8</ecNumber>
    </recommendedName>
    <alternativeName>
        <fullName evidence="1">Glutamate-1-semialdehyde aminotransferase</fullName>
        <shortName evidence="1">GSA-AT</shortName>
    </alternativeName>
</protein>
<proteinExistence type="inferred from homology"/>
<comment type="catalytic activity">
    <reaction evidence="1">
        <text>(S)-4-amino-5-oxopentanoate = 5-aminolevulinate</text>
        <dbReference type="Rhea" id="RHEA:14265"/>
        <dbReference type="ChEBI" id="CHEBI:57501"/>
        <dbReference type="ChEBI" id="CHEBI:356416"/>
        <dbReference type="EC" id="5.4.3.8"/>
    </reaction>
</comment>
<comment type="cofactor">
    <cofactor evidence="1">
        <name>pyridoxal 5'-phosphate</name>
        <dbReference type="ChEBI" id="CHEBI:597326"/>
    </cofactor>
</comment>
<comment type="pathway">
    <text evidence="1">Porphyrin-containing compound metabolism; protoporphyrin-IX biosynthesis; 5-aminolevulinate from L-glutamyl-tRNA(Glu): step 2/2.</text>
</comment>
<comment type="subunit">
    <text evidence="1">Homodimer.</text>
</comment>
<comment type="subcellular location">
    <subcellularLocation>
        <location evidence="1">Cytoplasm</location>
    </subcellularLocation>
</comment>
<comment type="similarity">
    <text evidence="1">Belongs to the class-III pyridoxal-phosphate-dependent aminotransferase family. HemL subfamily.</text>
</comment>
<name>GSA_ACIAD</name>
<feature type="chain" id="PRO_0000120389" description="Glutamate-1-semialdehyde 2,1-aminomutase">
    <location>
        <begin position="1"/>
        <end position="432"/>
    </location>
</feature>
<feature type="modified residue" description="N6-(pyridoxal phosphate)lysine" evidence="1">
    <location>
        <position position="270"/>
    </location>
</feature>
<sequence length="432" mass="46363">MSLSPKQVQLFEQASKHIPGGVNSPVRAFNGVGGTPVFIKKAQGAYLWDEDDKRYVDYVGSWGPMILGHAHPDIIQAVQTAAVDGLSFGAPTVHETTLADIICDIMPSIEMVRMTNSGTEATMTAIRLARGYTGRDKIVKFEGCYHGHSDSLLVKAGSGLLTLGEGEPTSKGVPVDFAKHTLTLPYNNIEALKECFAKFGHEIAGVIVEPVAGNMNLVTPIDGFLQAIRDVCDEYGSVFIIDEVMTGFRVALGGAQSVYQVKPDLTTLGKIIGAGLPVGAFGGKREIMECIAPLGGVYQAGTLSGNPLAMRAGITMFKHLREPDFYSKLEAKLQKLLTGLQAAANEAGIAFKTQQVGGMFGLYFTDQEDITSFDSMLACDTDAFKKFFHGMLERGVNLAPSAFEAGFISSAHSDEDIELTIQAAKETFAEMK</sequence>
<gene>
    <name evidence="1" type="primary">hemL</name>
    <name type="ordered locus">ACIAD1201</name>
</gene>
<dbReference type="EC" id="5.4.3.8" evidence="1"/>
<dbReference type="EMBL" id="CR543861">
    <property type="protein sequence ID" value="CAG68078.1"/>
    <property type="molecule type" value="Genomic_DNA"/>
</dbReference>
<dbReference type="RefSeq" id="WP_004926139.1">
    <property type="nucleotide sequence ID" value="NC_005966.1"/>
</dbReference>
<dbReference type="SMR" id="Q6FCY1"/>
<dbReference type="STRING" id="202950.GCA_001485005_00971"/>
<dbReference type="GeneID" id="45233629"/>
<dbReference type="KEGG" id="aci:ACIAD1201"/>
<dbReference type="eggNOG" id="COG0001">
    <property type="taxonomic scope" value="Bacteria"/>
</dbReference>
<dbReference type="HOGENOM" id="CLU_016922_1_5_6"/>
<dbReference type="OrthoDB" id="9801052at2"/>
<dbReference type="BioCyc" id="ASP62977:ACIAD_RS05525-MONOMER"/>
<dbReference type="UniPathway" id="UPA00251">
    <property type="reaction ID" value="UER00317"/>
</dbReference>
<dbReference type="Proteomes" id="UP000000430">
    <property type="component" value="Chromosome"/>
</dbReference>
<dbReference type="GO" id="GO:0005737">
    <property type="term" value="C:cytoplasm"/>
    <property type="evidence" value="ECO:0007669"/>
    <property type="project" value="UniProtKB-SubCell"/>
</dbReference>
<dbReference type="GO" id="GO:0042286">
    <property type="term" value="F:glutamate-1-semialdehyde 2,1-aminomutase activity"/>
    <property type="evidence" value="ECO:0007669"/>
    <property type="project" value="UniProtKB-UniRule"/>
</dbReference>
<dbReference type="GO" id="GO:0030170">
    <property type="term" value="F:pyridoxal phosphate binding"/>
    <property type="evidence" value="ECO:0007669"/>
    <property type="project" value="InterPro"/>
</dbReference>
<dbReference type="GO" id="GO:0008483">
    <property type="term" value="F:transaminase activity"/>
    <property type="evidence" value="ECO:0007669"/>
    <property type="project" value="InterPro"/>
</dbReference>
<dbReference type="GO" id="GO:0006782">
    <property type="term" value="P:protoporphyrinogen IX biosynthetic process"/>
    <property type="evidence" value="ECO:0007669"/>
    <property type="project" value="UniProtKB-UniRule"/>
</dbReference>
<dbReference type="CDD" id="cd00610">
    <property type="entry name" value="OAT_like"/>
    <property type="match status" value="1"/>
</dbReference>
<dbReference type="FunFam" id="3.40.640.10:FF:000021">
    <property type="entry name" value="Glutamate-1-semialdehyde 2,1-aminomutase"/>
    <property type="match status" value="1"/>
</dbReference>
<dbReference type="Gene3D" id="3.90.1150.10">
    <property type="entry name" value="Aspartate Aminotransferase, domain 1"/>
    <property type="match status" value="1"/>
</dbReference>
<dbReference type="Gene3D" id="3.40.640.10">
    <property type="entry name" value="Type I PLP-dependent aspartate aminotransferase-like (Major domain)"/>
    <property type="match status" value="1"/>
</dbReference>
<dbReference type="HAMAP" id="MF_00375">
    <property type="entry name" value="HemL_aminotrans_3"/>
    <property type="match status" value="1"/>
</dbReference>
<dbReference type="InterPro" id="IPR004639">
    <property type="entry name" value="4pyrrol_synth_GluAld_NH2Trfase"/>
</dbReference>
<dbReference type="InterPro" id="IPR005814">
    <property type="entry name" value="Aminotrans_3"/>
</dbReference>
<dbReference type="InterPro" id="IPR049704">
    <property type="entry name" value="Aminotrans_3_PPA_site"/>
</dbReference>
<dbReference type="InterPro" id="IPR015424">
    <property type="entry name" value="PyrdxlP-dep_Trfase"/>
</dbReference>
<dbReference type="InterPro" id="IPR015421">
    <property type="entry name" value="PyrdxlP-dep_Trfase_major"/>
</dbReference>
<dbReference type="InterPro" id="IPR015422">
    <property type="entry name" value="PyrdxlP-dep_Trfase_small"/>
</dbReference>
<dbReference type="NCBIfam" id="TIGR00713">
    <property type="entry name" value="hemL"/>
    <property type="match status" value="1"/>
</dbReference>
<dbReference type="NCBIfam" id="NF000818">
    <property type="entry name" value="PRK00062.1"/>
    <property type="match status" value="1"/>
</dbReference>
<dbReference type="PANTHER" id="PTHR43713">
    <property type="entry name" value="GLUTAMATE-1-SEMIALDEHYDE 2,1-AMINOMUTASE"/>
    <property type="match status" value="1"/>
</dbReference>
<dbReference type="PANTHER" id="PTHR43713:SF3">
    <property type="entry name" value="GLUTAMATE-1-SEMIALDEHYDE 2,1-AMINOMUTASE 1, CHLOROPLASTIC-RELATED"/>
    <property type="match status" value="1"/>
</dbReference>
<dbReference type="Pfam" id="PF00202">
    <property type="entry name" value="Aminotran_3"/>
    <property type="match status" value="1"/>
</dbReference>
<dbReference type="SUPFAM" id="SSF53383">
    <property type="entry name" value="PLP-dependent transferases"/>
    <property type="match status" value="1"/>
</dbReference>
<dbReference type="PROSITE" id="PS00600">
    <property type="entry name" value="AA_TRANSFER_CLASS_3"/>
    <property type="match status" value="1"/>
</dbReference>
<accession>Q6FCY1</accession>